<sequence length="96" mass="11269">MRKYEIMYIIRPGVEEEAQKALVERFAGVLTNNGAEIINTKEWGKRRLAYEINDLREGFYMILNVNANAEAINEFDRLAKINEDILRHIVVKEEEK</sequence>
<accession>Q6HAG2</accession>
<comment type="function">
    <text evidence="1">Binds together with bS18 to 16S ribosomal RNA.</text>
</comment>
<comment type="similarity">
    <text evidence="1">Belongs to the bacterial ribosomal protein bS6 family.</text>
</comment>
<organism>
    <name type="scientific">Bacillus thuringiensis subsp. konkukian (strain 97-27)</name>
    <dbReference type="NCBI Taxonomy" id="281309"/>
    <lineage>
        <taxon>Bacteria</taxon>
        <taxon>Bacillati</taxon>
        <taxon>Bacillota</taxon>
        <taxon>Bacilli</taxon>
        <taxon>Bacillales</taxon>
        <taxon>Bacillaceae</taxon>
        <taxon>Bacillus</taxon>
        <taxon>Bacillus cereus group</taxon>
    </lineage>
</organism>
<keyword id="KW-0687">Ribonucleoprotein</keyword>
<keyword id="KW-0689">Ribosomal protein</keyword>
<keyword id="KW-0694">RNA-binding</keyword>
<keyword id="KW-0699">rRNA-binding</keyword>
<name>RS6_BACHK</name>
<protein>
    <recommendedName>
        <fullName evidence="1">Small ribosomal subunit protein bS6</fullName>
    </recommendedName>
    <alternativeName>
        <fullName evidence="2">30S ribosomal protein S6</fullName>
    </alternativeName>
</protein>
<evidence type="ECO:0000255" key="1">
    <source>
        <dbReference type="HAMAP-Rule" id="MF_00360"/>
    </source>
</evidence>
<evidence type="ECO:0000305" key="2"/>
<feature type="chain" id="PRO_0000176723" description="Small ribosomal subunit protein bS6">
    <location>
        <begin position="1"/>
        <end position="96"/>
    </location>
</feature>
<proteinExistence type="inferred from homology"/>
<gene>
    <name evidence="1" type="primary">rpsF</name>
    <name type="ordered locus">BT9727_5155</name>
</gene>
<reference key="1">
    <citation type="journal article" date="2006" name="J. Bacteriol.">
        <title>Pathogenomic sequence analysis of Bacillus cereus and Bacillus thuringiensis isolates closely related to Bacillus anthracis.</title>
        <authorList>
            <person name="Han C.S."/>
            <person name="Xie G."/>
            <person name="Challacombe J.F."/>
            <person name="Altherr M.R."/>
            <person name="Bhotika S.S."/>
            <person name="Bruce D."/>
            <person name="Campbell C.S."/>
            <person name="Campbell M.L."/>
            <person name="Chen J."/>
            <person name="Chertkov O."/>
            <person name="Cleland C."/>
            <person name="Dimitrijevic M."/>
            <person name="Doggett N.A."/>
            <person name="Fawcett J.J."/>
            <person name="Glavina T."/>
            <person name="Goodwin L.A."/>
            <person name="Hill K.K."/>
            <person name="Hitchcock P."/>
            <person name="Jackson P.J."/>
            <person name="Keim P."/>
            <person name="Kewalramani A.R."/>
            <person name="Longmire J."/>
            <person name="Lucas S."/>
            <person name="Malfatti S."/>
            <person name="McMurry K."/>
            <person name="Meincke L.J."/>
            <person name="Misra M."/>
            <person name="Moseman B.L."/>
            <person name="Mundt M."/>
            <person name="Munk A.C."/>
            <person name="Okinaka R.T."/>
            <person name="Parson-Quintana B."/>
            <person name="Reilly L.P."/>
            <person name="Richardson P."/>
            <person name="Robinson D.L."/>
            <person name="Rubin E."/>
            <person name="Saunders E."/>
            <person name="Tapia R."/>
            <person name="Tesmer J.G."/>
            <person name="Thayer N."/>
            <person name="Thompson L.S."/>
            <person name="Tice H."/>
            <person name="Ticknor L.O."/>
            <person name="Wills P.L."/>
            <person name="Brettin T.S."/>
            <person name="Gilna P."/>
        </authorList>
    </citation>
    <scope>NUCLEOTIDE SEQUENCE [LARGE SCALE GENOMIC DNA]</scope>
    <source>
        <strain>97-27</strain>
    </source>
</reference>
<dbReference type="EMBL" id="AE017355">
    <property type="protein sequence ID" value="AAT63396.1"/>
    <property type="molecule type" value="Genomic_DNA"/>
</dbReference>
<dbReference type="RefSeq" id="WP_001233779.1">
    <property type="nucleotide sequence ID" value="NC_005957.1"/>
</dbReference>
<dbReference type="RefSeq" id="YP_039464.1">
    <property type="nucleotide sequence ID" value="NC_005957.1"/>
</dbReference>
<dbReference type="SMR" id="Q6HAG2"/>
<dbReference type="GeneID" id="75088663"/>
<dbReference type="KEGG" id="btk:BT9727_5155"/>
<dbReference type="PATRIC" id="fig|281309.8.peg.5480"/>
<dbReference type="HOGENOM" id="CLU_113441_5_3_9"/>
<dbReference type="Proteomes" id="UP000001301">
    <property type="component" value="Chromosome"/>
</dbReference>
<dbReference type="GO" id="GO:0005737">
    <property type="term" value="C:cytoplasm"/>
    <property type="evidence" value="ECO:0007669"/>
    <property type="project" value="UniProtKB-ARBA"/>
</dbReference>
<dbReference type="GO" id="GO:1990904">
    <property type="term" value="C:ribonucleoprotein complex"/>
    <property type="evidence" value="ECO:0007669"/>
    <property type="project" value="UniProtKB-KW"/>
</dbReference>
<dbReference type="GO" id="GO:0005840">
    <property type="term" value="C:ribosome"/>
    <property type="evidence" value="ECO:0007669"/>
    <property type="project" value="UniProtKB-KW"/>
</dbReference>
<dbReference type="GO" id="GO:0070181">
    <property type="term" value="F:small ribosomal subunit rRNA binding"/>
    <property type="evidence" value="ECO:0007669"/>
    <property type="project" value="TreeGrafter"/>
</dbReference>
<dbReference type="GO" id="GO:0003735">
    <property type="term" value="F:structural constituent of ribosome"/>
    <property type="evidence" value="ECO:0007669"/>
    <property type="project" value="InterPro"/>
</dbReference>
<dbReference type="GO" id="GO:0006412">
    <property type="term" value="P:translation"/>
    <property type="evidence" value="ECO:0007669"/>
    <property type="project" value="UniProtKB-UniRule"/>
</dbReference>
<dbReference type="CDD" id="cd00473">
    <property type="entry name" value="bS6"/>
    <property type="match status" value="1"/>
</dbReference>
<dbReference type="FunFam" id="3.30.70.60:FF:000002">
    <property type="entry name" value="30S ribosomal protein S6"/>
    <property type="match status" value="1"/>
</dbReference>
<dbReference type="Gene3D" id="3.30.70.60">
    <property type="match status" value="1"/>
</dbReference>
<dbReference type="HAMAP" id="MF_00360">
    <property type="entry name" value="Ribosomal_bS6"/>
    <property type="match status" value="1"/>
</dbReference>
<dbReference type="InterPro" id="IPR000529">
    <property type="entry name" value="Ribosomal_bS6"/>
</dbReference>
<dbReference type="InterPro" id="IPR020815">
    <property type="entry name" value="Ribosomal_bS6_CS"/>
</dbReference>
<dbReference type="InterPro" id="IPR035980">
    <property type="entry name" value="Ribosomal_bS6_sf"/>
</dbReference>
<dbReference type="InterPro" id="IPR020814">
    <property type="entry name" value="Ribosomal_S6_plastid/chlpt"/>
</dbReference>
<dbReference type="InterPro" id="IPR014717">
    <property type="entry name" value="Transl_elong_EF1B/ribsomal_bS6"/>
</dbReference>
<dbReference type="NCBIfam" id="TIGR00166">
    <property type="entry name" value="S6"/>
    <property type="match status" value="1"/>
</dbReference>
<dbReference type="PANTHER" id="PTHR21011">
    <property type="entry name" value="MITOCHONDRIAL 28S RIBOSOMAL PROTEIN S6"/>
    <property type="match status" value="1"/>
</dbReference>
<dbReference type="PANTHER" id="PTHR21011:SF1">
    <property type="entry name" value="SMALL RIBOSOMAL SUBUNIT PROTEIN BS6M"/>
    <property type="match status" value="1"/>
</dbReference>
<dbReference type="Pfam" id="PF01250">
    <property type="entry name" value="Ribosomal_S6"/>
    <property type="match status" value="1"/>
</dbReference>
<dbReference type="SUPFAM" id="SSF54995">
    <property type="entry name" value="Ribosomal protein S6"/>
    <property type="match status" value="1"/>
</dbReference>
<dbReference type="PROSITE" id="PS01048">
    <property type="entry name" value="RIBOSOMAL_S6"/>
    <property type="match status" value="1"/>
</dbReference>